<dbReference type="EMBL" id="AF308860">
    <property type="protein sequence ID" value="AAG45416.1"/>
    <property type="molecule type" value="mRNA"/>
</dbReference>
<dbReference type="EMBL" id="FO081276">
    <property type="protein sequence ID" value="CCD70417.1"/>
    <property type="molecule type" value="Genomic_DNA"/>
</dbReference>
<dbReference type="EMBL" id="FO081276">
    <property type="protein sequence ID" value="CCD70418.1"/>
    <property type="molecule type" value="Genomic_DNA"/>
</dbReference>
<dbReference type="RefSeq" id="NP_001021811.1">
    <property type="nucleotide sequence ID" value="NM_001026640.3"/>
</dbReference>
<dbReference type="RefSeq" id="NP_740821.1">
    <molecule id="Q9N4G4-1"/>
    <property type="nucleotide sequence ID" value="NM_170837.6"/>
</dbReference>
<dbReference type="BioGRID" id="37321">
    <property type="interactions" value="3"/>
</dbReference>
<dbReference type="FunCoup" id="Q9N4G4">
    <property type="interactions" value="1152"/>
</dbReference>
<dbReference type="IntAct" id="Q9N4G4">
    <property type="interactions" value="2"/>
</dbReference>
<dbReference type="STRING" id="6239.Y71F9B.10c.1"/>
<dbReference type="iPTMnet" id="Q9N4G4"/>
<dbReference type="PaxDb" id="6239-Y71F9B.10a"/>
<dbReference type="PeptideAtlas" id="Q9N4G4"/>
<dbReference type="EnsemblMetazoa" id="Y71F9B.10a.1">
    <molecule id="Q9N4G4-1"/>
    <property type="protein sequence ID" value="Y71F9B.10a.1"/>
    <property type="gene ID" value="WBGene00004946"/>
</dbReference>
<dbReference type="EnsemblMetazoa" id="Y71F9B.10b.1">
    <property type="protein sequence ID" value="Y71F9B.10b.1"/>
    <property type="gene ID" value="WBGene00004946"/>
</dbReference>
<dbReference type="GeneID" id="171840"/>
<dbReference type="KEGG" id="cel:CELE_Y71F9B.10"/>
<dbReference type="UCSC" id="Y71F9B.10a.1">
    <molecule id="Q9N4G4-1"/>
    <property type="organism name" value="c. elegans"/>
</dbReference>
<dbReference type="AGR" id="WB:WBGene00004946"/>
<dbReference type="CTD" id="171840"/>
<dbReference type="WormBase" id="Y71F9B.10a">
    <molecule id="Q9N4G4-1"/>
    <property type="protein sequence ID" value="CE28808"/>
    <property type="gene ID" value="WBGene00004946"/>
    <property type="gene designation" value="sop-3"/>
</dbReference>
<dbReference type="WormBase" id="Y71F9B.10b">
    <molecule id="Q9N4G4-2"/>
    <property type="protein sequence ID" value="CE29912"/>
    <property type="gene ID" value="WBGene00004946"/>
    <property type="gene designation" value="sop-3"/>
</dbReference>
<dbReference type="eggNOG" id="ENOG502QPZ7">
    <property type="taxonomic scope" value="Eukaryota"/>
</dbReference>
<dbReference type="GeneTree" id="ENSGT00970000196378"/>
<dbReference type="InParanoid" id="Q9N4G4"/>
<dbReference type="OrthoDB" id="5861512at2759"/>
<dbReference type="SignaLink" id="Q9N4G4"/>
<dbReference type="PRO" id="PR:Q9N4G4"/>
<dbReference type="Proteomes" id="UP000001940">
    <property type="component" value="Chromosome I"/>
</dbReference>
<dbReference type="Bgee" id="WBGene00004946">
    <property type="expression patterns" value="Expressed in embryo and 4 other cell types or tissues"/>
</dbReference>
<dbReference type="ExpressionAtlas" id="Q9N4G4">
    <property type="expression patterns" value="baseline and differential"/>
</dbReference>
<dbReference type="GO" id="GO:0005634">
    <property type="term" value="C:nucleus"/>
    <property type="evidence" value="ECO:0007669"/>
    <property type="project" value="UniProtKB-SubCell"/>
</dbReference>
<comment type="function">
    <text evidence="1">Component of the Mediator complex, a coactivator involved in the regulated transcription of nearly all RNA polymerase II-dependent genes. Mediator functions as a bridge to convey information from gene-specific regulatory proteins to the basal RNA polymerase II transcription machinery. Mediator is recruited to promoters by direct interactions with regulatory proteins and serves as a scaffold for the assembly of a functional preinitiation complex with RNA polymerase II and the general transcription factors (By similarity).</text>
</comment>
<comment type="subunit">
    <text evidence="1">Component of the Mediator complex.</text>
</comment>
<comment type="interaction">
    <interactant intactId="EBI-2315681">
        <id>Q9N4G4</id>
    </interactant>
    <interactant intactId="EBI-2315635">
        <id>Q8MPT2</id>
        <label>T04C9.1</label>
    </interactant>
    <organismsDiffer>false</organismsDiffer>
    <experiments>6</experiments>
</comment>
<comment type="subcellular location">
    <subcellularLocation>
        <location evidence="1">Nucleus</location>
    </subcellularLocation>
</comment>
<comment type="alternative products">
    <event type="alternative splicing"/>
    <isoform>
        <id>Q9N4G4-1</id>
        <name>a</name>
        <sequence type="displayed"/>
    </isoform>
    <isoform>
        <id>Q9N4G4-2</id>
        <name>b</name>
        <sequence type="described" ref="VSP_027908 VSP_027909"/>
    </isoform>
</comment>
<comment type="similarity">
    <text evidence="4">Belongs to the Mediator complex subunit 1 family.</text>
</comment>
<protein>
    <recommendedName>
        <fullName>Mediator of RNA polymerase II transcription subunit 1.1</fullName>
    </recommendedName>
    <alternativeName>
        <fullName>Mediator complex subunit 1.1</fullName>
    </alternativeName>
    <alternativeName>
        <fullName>Suppressor of pal-1 protein 3</fullName>
    </alternativeName>
</protein>
<gene>
    <name type="primary">sop-3</name>
    <name type="synonym">mdt-1.1</name>
    <name type="ORF">Y71F9B.10</name>
</gene>
<accession>Q9N4G4</accession>
<accession>Q95Y43</accession>
<accession>Q9GPV1</accession>
<proteinExistence type="evidence at protein level"/>
<reference key="1">
    <citation type="journal article" date="2001" name="Development">
        <title>The novel C. elegans gene sop-3 modulates Wnt signaling to regulate Hox gene expression.</title>
        <authorList>
            <person name="Zhang H."/>
            <person name="Emmons S.W."/>
        </authorList>
    </citation>
    <scope>NUCLEOTIDE SEQUENCE [MRNA] (ISOFORM A)</scope>
</reference>
<reference key="2">
    <citation type="journal article" date="1998" name="Science">
        <title>Genome sequence of the nematode C. elegans: a platform for investigating biology.</title>
        <authorList>
            <consortium name="The C. elegans sequencing consortium"/>
        </authorList>
    </citation>
    <scope>NUCLEOTIDE SEQUENCE [LARGE SCALE GENOMIC DNA]</scope>
    <scope>ALTERNATIVE SPLICING</scope>
    <source>
        <strain>Bristol N2</strain>
    </source>
</reference>
<sequence length="1475" mass="164547">MIIEERKNHELNLESIDRDLRMENVRQSAEKLGWEHFARSVRRNLLEKRQTLDARTRLDVLGSLVFMKEHLPIDNDATIARKVQQLSEGLGEHCVFSTQNSGFSIRNPDVTIDIGVAEDQISTCKIGYFGQPLTDAPGALALMKNGEFSKLRDSITAILSSLPKEITLSEKNACKEAFRALDQLLIRDAADSSFTAINTGKYGFYAPRNELRSGRIYYVAEPVLIRLAEKEGKTKADASYLDLLPYIEISFFKHDKPSKLPVFTQTGEWSTFNDANVCICVRFNQGFLLSQQTIRKLSHIVPKSPLVRNYVNFYRYMTGRVGVKSNLKLLTQFPDEGDIQQQYQVDSKMLTKEDDVVAMEMYLSDFRDLSKLIETLRSEWKHASLWESILAICESSKGEQKEVNAVDMQLVLRRTEFFLQFDTDYGSMTMQIFEKSPSNYVVKTTSQITGESPSLDFDKMLTEKLNSTWSIPATLTFAITDLKCRINSVLNCVISFDSSSSSDKQHQNYWSISNNNTQLMQSAAQKSAAKCTKKKVTVLEVGPAIEPTQLVYTRENDEEFQGSLLSSFGEVDDYYVKTSTIGRTRPQPRPKREPNQLTSMDMMSAELDKSRHTMEGSMRDAQTSSFLDAARVRMKQSIGAAHAVGLASHQPPASPVAAAAAAPGGPMRHNSYPSGFEPPPSVAPYDFPADPSKKQRKQRAKKQPGEEPPAGRGKGGKKGRGAGAVGAAAAGGRKSAGGAGENPFGMDPMRPPMLQRSSSEQHNPNPHQMSQYQMQQYQQNQQFRMHQMQQQQQQQFQMQSPKNPLVPAYTDEDSDEECDPPPPPKPQVSTSSRMSSVPSHPPPPPQQLGNPMVGYPGMPLQSPNHLPLTPSPLSAPPKPFSPEQQHHFGMKMRETSYWKELERLETKPDVEKLKQQLSSSSSSSQAEASDPPSTSTEAQDPPKPSSSSAPPPPKKKLGLEAAISKIRGQQEQALQKQLQQQESVESELATPHPGSSGAPPLAPHQVNRARNLNDIFDDEADDSSPTADIKPSLQALQKPTDTSSQSTSSEPPPKKEPADEQPEREKEKLILKIPKMLKPVVDDRREDRKERDRDRDRDRDRDEDREKVRDKEDKAQREKDKKEKERERRRQRDRDRTEQKKSDREKEPSKKRKLEKKDEKEKDRREPERKKGKSDGKEYSKASTTSLIPTLSLKNFRIPKKDTVEEEKKDVKEEAPGPSSSTESKKEPPSAAPITRKESTTAPVAPAVQQQQQRKESFTALPSLPEQQQHHREPLLKKKPPLQPPPPPQMTGPPIGIYPGPPAPGNLPGSSRPSGNRKQPLPPPPPMIRGPPPDQMYRDRSGGGGGSMRGGFPPASHYHGGTSGVNKQVASYAQGLPPGMGPPVVKPHGNNYQASQWVRPPTHRDSSHSYHGMPSLGPPQLQREPPAPPPPQMIPLPKDPPVLREHPREHRAHRGGADDDGPDSPEEGTLRIDDE</sequence>
<organism>
    <name type="scientific">Caenorhabditis elegans</name>
    <dbReference type="NCBI Taxonomy" id="6239"/>
    <lineage>
        <taxon>Eukaryota</taxon>
        <taxon>Metazoa</taxon>
        <taxon>Ecdysozoa</taxon>
        <taxon>Nematoda</taxon>
        <taxon>Chromadorea</taxon>
        <taxon>Rhabditida</taxon>
        <taxon>Rhabditina</taxon>
        <taxon>Rhabditomorpha</taxon>
        <taxon>Rhabditoidea</taxon>
        <taxon>Rhabditidae</taxon>
        <taxon>Peloderinae</taxon>
        <taxon>Caenorhabditis</taxon>
    </lineage>
</organism>
<evidence type="ECO:0000250" key="1"/>
<evidence type="ECO:0000255" key="2"/>
<evidence type="ECO:0000256" key="3">
    <source>
        <dbReference type="SAM" id="MobiDB-lite"/>
    </source>
</evidence>
<evidence type="ECO:0000305" key="4"/>
<feature type="chain" id="PRO_0000302025" description="Mediator of RNA polymerase II transcription subunit 1.1">
    <location>
        <begin position="1"/>
        <end position="1475"/>
    </location>
</feature>
<feature type="region of interest" description="Disordered" evidence="3">
    <location>
        <begin position="579"/>
        <end position="600"/>
    </location>
</feature>
<feature type="region of interest" description="Disordered" evidence="3">
    <location>
        <begin position="645"/>
        <end position="894"/>
    </location>
</feature>
<feature type="region of interest" description="Disordered" evidence="3">
    <location>
        <begin position="908"/>
        <end position="1475"/>
    </location>
</feature>
<feature type="coiled-coil region" evidence="2">
    <location>
        <begin position="1098"/>
        <end position="1135"/>
    </location>
</feature>
<feature type="compositionally biased region" description="Low complexity" evidence="3">
    <location>
        <begin position="655"/>
        <end position="666"/>
    </location>
</feature>
<feature type="compositionally biased region" description="Polar residues" evidence="3">
    <location>
        <begin position="755"/>
        <end position="766"/>
    </location>
</feature>
<feature type="compositionally biased region" description="Low complexity" evidence="3">
    <location>
        <begin position="767"/>
        <end position="800"/>
    </location>
</feature>
<feature type="compositionally biased region" description="Acidic residues" evidence="3">
    <location>
        <begin position="810"/>
        <end position="819"/>
    </location>
</feature>
<feature type="compositionally biased region" description="Low complexity" evidence="3">
    <location>
        <begin position="829"/>
        <end position="838"/>
    </location>
</feature>
<feature type="compositionally biased region" description="Pro residues" evidence="3">
    <location>
        <begin position="869"/>
        <end position="880"/>
    </location>
</feature>
<feature type="compositionally biased region" description="Low complexity" evidence="3">
    <location>
        <begin position="915"/>
        <end position="929"/>
    </location>
</feature>
<feature type="compositionally biased region" description="Pro residues" evidence="3">
    <location>
        <begin position="941"/>
        <end position="952"/>
    </location>
</feature>
<feature type="compositionally biased region" description="Low complexity" evidence="3">
    <location>
        <begin position="969"/>
        <end position="989"/>
    </location>
</feature>
<feature type="compositionally biased region" description="Low complexity" evidence="3">
    <location>
        <begin position="1037"/>
        <end position="1049"/>
    </location>
</feature>
<feature type="compositionally biased region" description="Basic and acidic residues" evidence="3">
    <location>
        <begin position="1052"/>
        <end position="1070"/>
    </location>
</feature>
<feature type="compositionally biased region" description="Basic and acidic residues" evidence="3">
    <location>
        <begin position="1080"/>
        <end position="1148"/>
    </location>
</feature>
<feature type="compositionally biased region" description="Basic and acidic residues" evidence="3">
    <location>
        <begin position="1155"/>
        <end position="1180"/>
    </location>
</feature>
<feature type="compositionally biased region" description="Polar residues" evidence="3">
    <location>
        <begin position="1181"/>
        <end position="1193"/>
    </location>
</feature>
<feature type="compositionally biased region" description="Basic and acidic residues" evidence="3">
    <location>
        <begin position="1199"/>
        <end position="1215"/>
    </location>
</feature>
<feature type="compositionally biased region" description="Low complexity" evidence="3">
    <location>
        <begin position="1242"/>
        <end position="1252"/>
    </location>
</feature>
<feature type="compositionally biased region" description="Pro residues" evidence="3">
    <location>
        <begin position="1281"/>
        <end position="1291"/>
    </location>
</feature>
<feature type="compositionally biased region" description="Polar residues" evidence="3">
    <location>
        <begin position="1308"/>
        <end position="1317"/>
    </location>
</feature>
<feature type="compositionally biased region" description="Pro residues" evidence="3">
    <location>
        <begin position="1320"/>
        <end position="1334"/>
    </location>
</feature>
<feature type="compositionally biased region" description="Pro residues" evidence="3">
    <location>
        <begin position="1425"/>
        <end position="1440"/>
    </location>
</feature>
<feature type="splice variant" id="VSP_027908" description="In isoform b." evidence="4">
    <original>VTVLEVGPA</original>
    <variation>ELYALTTSK</variation>
    <location>
        <begin position="536"/>
        <end position="544"/>
    </location>
</feature>
<feature type="splice variant" id="VSP_027909" description="In isoform b." evidence="4">
    <location>
        <begin position="545"/>
        <end position="1475"/>
    </location>
</feature>
<name>MED1_CAEEL</name>
<keyword id="KW-0010">Activator</keyword>
<keyword id="KW-0025">Alternative splicing</keyword>
<keyword id="KW-0175">Coiled coil</keyword>
<keyword id="KW-0539">Nucleus</keyword>
<keyword id="KW-1185">Reference proteome</keyword>
<keyword id="KW-0804">Transcription</keyword>
<keyword id="KW-0805">Transcription regulation</keyword>